<proteinExistence type="evidence at protein level"/>
<comment type="function">
    <text evidence="3">Snake venom phospholipase A2 (PLA2) that shows presynaptic neurotoxicity. PLA2 catalyzes the calcium-dependent hydrolysis of the 2-acyl groups in 3-sn-phosphoglycerides.</text>
</comment>
<comment type="catalytic activity">
    <reaction>
        <text>a 1,2-diacyl-sn-glycero-3-phosphocholine + H2O = a 1-acyl-sn-glycero-3-phosphocholine + a fatty acid + H(+)</text>
        <dbReference type="Rhea" id="RHEA:15801"/>
        <dbReference type="ChEBI" id="CHEBI:15377"/>
        <dbReference type="ChEBI" id="CHEBI:15378"/>
        <dbReference type="ChEBI" id="CHEBI:28868"/>
        <dbReference type="ChEBI" id="CHEBI:57643"/>
        <dbReference type="ChEBI" id="CHEBI:58168"/>
        <dbReference type="EC" id="3.1.1.4"/>
    </reaction>
</comment>
<comment type="cofactor">
    <cofactor evidence="1">
        <name>Ca(2+)</name>
        <dbReference type="ChEBI" id="CHEBI:29108"/>
    </cofactor>
    <text evidence="1">Binds 1 Ca(2+) ion.</text>
</comment>
<comment type="biophysicochemical properties">
    <kinetics>
        <Vmax evidence="3">480.0 umol/min/mg enzyme with DPPC + deoxycholate as substrate (at pH 7.4 and 37 degrees Celsius)</Vmax>
        <Vmax evidence="3">195.0 umol/min/mg enzyme with DPPC + Triton X-100 as substrate (at pH 7.4 and 37 degrees Celsius)</Vmax>
        <text>When tested as a monomer.</text>
    </kinetics>
</comment>
<comment type="subunit">
    <text evidence="3">Heterodimer of an acidic subunit and a basic chain. The acidic subunit is non-toxic, without enzymatic activity and comprises 3 peptides that are cross-linked by 7 disulfide bridges. The basic subunit is toxic, has phospholipase A2 activity and is composed of a single chain.</text>
</comment>
<comment type="subcellular location">
    <subcellularLocation>
        <location evidence="3">Secreted</location>
    </subcellularLocation>
</comment>
<comment type="tissue specificity">
    <text evidence="6">Expressed by the venom gland.</text>
</comment>
<comment type="mass spectrometry"/>
<comment type="miscellaneous">
    <text evidence="6">The subspecies C.h.atricaudatus mentioned in PubMed:15032748 is currently considered invalid. However, since different origins of specimens explain sequence variations, the specimen origins are indicated under strain in the reference section (in PubMed:15032748, Iowa also refers to C.horridus and South Carolina to C.h.atricaudatus).</text>
</comment>
<comment type="similarity">
    <text evidence="5">Belongs to the phospholipase A2 family. Group II subfamily.</text>
</comment>
<organism>
    <name type="scientific">Crotalus horridus</name>
    <name type="common">Timber rattlesnake</name>
    <dbReference type="NCBI Taxonomy" id="35024"/>
    <lineage>
        <taxon>Eukaryota</taxon>
        <taxon>Metazoa</taxon>
        <taxon>Chordata</taxon>
        <taxon>Craniata</taxon>
        <taxon>Vertebrata</taxon>
        <taxon>Euteleostomi</taxon>
        <taxon>Lepidosauria</taxon>
        <taxon>Squamata</taxon>
        <taxon>Bifurcata</taxon>
        <taxon>Unidentata</taxon>
        <taxon>Episquamata</taxon>
        <taxon>Toxicofera</taxon>
        <taxon>Serpentes</taxon>
        <taxon>Colubroidea</taxon>
        <taxon>Viperidae</taxon>
        <taxon>Crotalinae</taxon>
        <taxon>Crotalus</taxon>
    </lineage>
</organism>
<reference evidence="8" key="1">
    <citation type="journal article" date="2013" name="BMC Genomics">
        <title>The genesis of an exceptionally lethal venom in the timber rattlesnake (Crotalus horridus) revealed through comparative venom-gland transcriptomics.</title>
        <authorList>
            <person name="Rokyta D.R."/>
            <person name="Wray K.P."/>
            <person name="Margres M.J."/>
        </authorList>
    </citation>
    <scope>NUCLEOTIDE SEQUENCE [LARGE SCALE MRNA]</scope>
    <source>
        <tissue>Venom gland</tissue>
    </source>
</reference>
<reference evidence="10" key="2">
    <citation type="journal article" date="2015" name="G3 (Bethesda)">
        <title>Post-transcriptional mechanisms contribute little to phenotypic variation in snake venoms.</title>
        <authorList>
            <person name="Rokyta D.R."/>
            <person name="Margres M.J."/>
            <person name="Calvin K."/>
        </authorList>
    </citation>
    <scope>NUCLEOTIDE SEQUENCE [LARGE SCALE MRNA]</scope>
    <source>
        <tissue>Venom gland</tissue>
    </source>
</reference>
<reference evidence="9" key="3">
    <citation type="journal article" date="2015" name="Toxicon">
        <title>The transcriptomic and proteomic basis for the evolution of a novel venom phenotype within the Timber Rattlesnake (Crotalus horridus).</title>
        <authorList>
            <person name="Rokyta D.R."/>
            <person name="Wray K.P."/>
            <person name="McGivern J.J."/>
            <person name="Margres M.J."/>
        </authorList>
    </citation>
    <scope>NUCLEOTIDE SEQUENCE [LARGE SCALE MRNA]</scope>
    <source>
        <tissue>Venom gland</tissue>
    </source>
</reference>
<reference evidence="7" key="4">
    <citation type="journal article" date="2018" name="Mol. Biol. Evol.">
        <title>A single mutation unlocks cascading exaptations in the origin of a potent pitviper neurotoxin.</title>
        <authorList>
            <person name="Whittington A.C."/>
            <person name="Mason A.J."/>
            <person name="Rokyta D.R."/>
        </authorList>
    </citation>
    <scope>NUCLEOTIDE SEQUENCE [LARGE SCALE MRNA]</scope>
    <source>
        <tissue>Venom gland</tissue>
    </source>
</reference>
<reference key="5">
    <citation type="journal article" date="2004" name="Biochem. J.">
        <title>Molecular evolution and structure-function relationships of crotoxin-like and asparagine-6-containing phospholipases A2 in pit viper venoms.</title>
        <authorList>
            <person name="Chen Y.-H."/>
            <person name="Wang Y.-M."/>
            <person name="Hseu M.-J."/>
            <person name="Tsai I.-H."/>
        </authorList>
    </citation>
    <scope>PROTEIN SEQUENCE OF 17-39</scope>
    <scope>FUNCTION</scope>
    <scope>BIOPHYSICOCHEMICAL PROPERTIES</scope>
    <scope>SUBUNIT</scope>
    <scope>MASS SPECTROMETRY</scope>
    <scope>SUBCELLULAR LOCATION</scope>
    <source>
        <strain>South Carolina</strain>
        <tissue>Venom</tissue>
    </source>
</reference>
<protein>
    <recommendedName>
        <fullName evidence="4">Basic phospholipase A2 canebraxin B</fullName>
        <shortName>svPLA2</shortName>
        <ecNumber>3.1.1.4</ecNumber>
    </recommendedName>
    <alternativeName>
        <fullName>Phosphatidylcholine 2-acylhydrolase</fullName>
    </alternativeName>
</protein>
<dbReference type="EC" id="3.1.1.4"/>
<dbReference type="EMBL" id="MF974422">
    <property type="protein sequence ID" value="AUS82456.1"/>
    <property type="molecule type" value="mRNA"/>
</dbReference>
<dbReference type="EMBL" id="GAAZ01003062">
    <property type="protein sequence ID" value="JAA94881.1"/>
    <property type="molecule type" value="mRNA"/>
</dbReference>
<dbReference type="EMBL" id="GBKC01002430">
    <property type="protein sequence ID" value="JAG43640.1"/>
    <property type="molecule type" value="Transcribed_RNA"/>
</dbReference>
<dbReference type="EMBL" id="GBKC01002428">
    <property type="protein sequence ID" value="JAG43642.1"/>
    <property type="molecule type" value="Transcribed_RNA"/>
</dbReference>
<dbReference type="EMBL" id="GDBC01000034">
    <property type="protein sequence ID" value="JAS04770.1"/>
    <property type="molecule type" value="Transcribed_RNA"/>
</dbReference>
<dbReference type="EMBL" id="GDBC01000032">
    <property type="protein sequence ID" value="JAS04772.1"/>
    <property type="molecule type" value="Transcribed_RNA"/>
</dbReference>
<dbReference type="GO" id="GO:0005576">
    <property type="term" value="C:extracellular region"/>
    <property type="evidence" value="ECO:0007669"/>
    <property type="project" value="UniProtKB-SubCell"/>
</dbReference>
<dbReference type="GO" id="GO:0046872">
    <property type="term" value="F:metal ion binding"/>
    <property type="evidence" value="ECO:0007669"/>
    <property type="project" value="UniProtKB-KW"/>
</dbReference>
<dbReference type="GO" id="GO:0004623">
    <property type="term" value="F:phospholipase A2 activity"/>
    <property type="evidence" value="ECO:0007669"/>
    <property type="project" value="UniProtKB-EC"/>
</dbReference>
<dbReference type="GO" id="GO:0090729">
    <property type="term" value="F:toxin activity"/>
    <property type="evidence" value="ECO:0007669"/>
    <property type="project" value="UniProtKB-KW"/>
</dbReference>
<dbReference type="GO" id="GO:0016042">
    <property type="term" value="P:lipid catabolic process"/>
    <property type="evidence" value="ECO:0007669"/>
    <property type="project" value="UniProtKB-KW"/>
</dbReference>
<dbReference type="CDD" id="cd00125">
    <property type="entry name" value="PLA2c"/>
    <property type="match status" value="1"/>
</dbReference>
<dbReference type="FunFam" id="1.20.90.10:FF:000001">
    <property type="entry name" value="Basic phospholipase A2 homolog"/>
    <property type="match status" value="1"/>
</dbReference>
<dbReference type="Gene3D" id="1.20.90.10">
    <property type="entry name" value="Phospholipase A2 domain"/>
    <property type="match status" value="1"/>
</dbReference>
<dbReference type="InterPro" id="IPR001211">
    <property type="entry name" value="PLipase_A2"/>
</dbReference>
<dbReference type="InterPro" id="IPR033112">
    <property type="entry name" value="PLipase_A2_Asp_AS"/>
</dbReference>
<dbReference type="InterPro" id="IPR016090">
    <property type="entry name" value="PLipase_A2_dom"/>
</dbReference>
<dbReference type="InterPro" id="IPR036444">
    <property type="entry name" value="PLipase_A2_dom_sf"/>
</dbReference>
<dbReference type="InterPro" id="IPR033113">
    <property type="entry name" value="PLipase_A2_His_AS"/>
</dbReference>
<dbReference type="PANTHER" id="PTHR11716">
    <property type="entry name" value="PHOSPHOLIPASE A2 FAMILY MEMBER"/>
    <property type="match status" value="1"/>
</dbReference>
<dbReference type="PANTHER" id="PTHR11716:SF9">
    <property type="entry name" value="PHOSPHOLIPASE A2, MEMBRANE ASSOCIATED"/>
    <property type="match status" value="1"/>
</dbReference>
<dbReference type="Pfam" id="PF00068">
    <property type="entry name" value="Phospholip_A2_1"/>
    <property type="match status" value="1"/>
</dbReference>
<dbReference type="PRINTS" id="PR00389">
    <property type="entry name" value="PHPHLIPASEA2"/>
</dbReference>
<dbReference type="SMART" id="SM00085">
    <property type="entry name" value="PA2c"/>
    <property type="match status" value="1"/>
</dbReference>
<dbReference type="SUPFAM" id="SSF48619">
    <property type="entry name" value="Phospholipase A2, PLA2"/>
    <property type="match status" value="1"/>
</dbReference>
<name>PA2BB_CROHD</name>
<evidence type="ECO:0000250" key="1"/>
<evidence type="ECO:0000250" key="2">
    <source>
        <dbReference type="UniProtKB" id="P62022"/>
    </source>
</evidence>
<evidence type="ECO:0000269" key="3">
    <source>
    </source>
</evidence>
<evidence type="ECO:0000303" key="4">
    <source>
    </source>
</evidence>
<evidence type="ECO:0000305" key="5"/>
<evidence type="ECO:0000305" key="6">
    <source>
    </source>
</evidence>
<evidence type="ECO:0000312" key="7">
    <source>
        <dbReference type="EMBL" id="AUS82456.1"/>
    </source>
</evidence>
<evidence type="ECO:0000312" key="8">
    <source>
        <dbReference type="EMBL" id="JAA94881.1"/>
    </source>
</evidence>
<evidence type="ECO:0000312" key="9">
    <source>
        <dbReference type="EMBL" id="JAG43640.1"/>
    </source>
</evidence>
<evidence type="ECO:0000312" key="10">
    <source>
        <dbReference type="EMBL" id="JAS04770.1"/>
    </source>
</evidence>
<sequence>MRALWIVAVLLVAVEGHLLQFNKMIKFETRKNAIPFYAFYGCYCGWGGRGRPKDATDRCCFVHDCCYGKLANCNTKWDIYPYSLKSGYITCGKGSWCEEQICECDRVAAECLRRSLSTYKYGYMFYPDSRCKGPSEQC</sequence>
<feature type="signal peptide" evidence="3">
    <location>
        <begin position="1"/>
        <end position="16"/>
    </location>
</feature>
<feature type="chain" id="PRO_0000418571" description="Basic phospholipase A2 canebraxin B" evidence="6">
    <location>
        <begin position="17"/>
        <end position="138"/>
    </location>
</feature>
<feature type="active site" evidence="2">
    <location>
        <position position="63"/>
    </location>
</feature>
<feature type="active site" evidence="2">
    <location>
        <position position="105"/>
    </location>
</feature>
<feature type="binding site" evidence="2">
    <location>
        <position position="43"/>
    </location>
    <ligand>
        <name>Ca(2+)</name>
        <dbReference type="ChEBI" id="CHEBI:29108"/>
    </ligand>
</feature>
<feature type="binding site" evidence="2">
    <location>
        <position position="45"/>
    </location>
    <ligand>
        <name>Ca(2+)</name>
        <dbReference type="ChEBI" id="CHEBI:29108"/>
    </ligand>
</feature>
<feature type="binding site" evidence="2">
    <location>
        <position position="47"/>
    </location>
    <ligand>
        <name>Ca(2+)</name>
        <dbReference type="ChEBI" id="CHEBI:29108"/>
    </ligand>
</feature>
<feature type="binding site" evidence="2">
    <location>
        <position position="64"/>
    </location>
    <ligand>
        <name>Ca(2+)</name>
        <dbReference type="ChEBI" id="CHEBI:29108"/>
    </ligand>
</feature>
<feature type="disulfide bond" evidence="2">
    <location>
        <begin position="42"/>
        <end position="131"/>
    </location>
</feature>
<feature type="disulfide bond" evidence="2">
    <location>
        <begin position="44"/>
        <end position="60"/>
    </location>
</feature>
<feature type="disulfide bond" evidence="2">
    <location>
        <begin position="59"/>
        <end position="111"/>
    </location>
</feature>
<feature type="disulfide bond" evidence="2">
    <location>
        <begin position="65"/>
        <end position="138"/>
    </location>
</feature>
<feature type="disulfide bond" evidence="2">
    <location>
        <begin position="66"/>
        <end position="104"/>
    </location>
</feature>
<feature type="disulfide bond" evidence="2">
    <location>
        <begin position="73"/>
        <end position="97"/>
    </location>
</feature>
<feature type="disulfide bond" evidence="2">
    <location>
        <begin position="91"/>
        <end position="102"/>
    </location>
</feature>
<keyword id="KW-0106">Calcium</keyword>
<keyword id="KW-0903">Direct protein sequencing</keyword>
<keyword id="KW-1015">Disulfide bond</keyword>
<keyword id="KW-0378">Hydrolase</keyword>
<keyword id="KW-0442">Lipid degradation</keyword>
<keyword id="KW-0443">Lipid metabolism</keyword>
<keyword id="KW-0479">Metal-binding</keyword>
<keyword id="KW-0528">Neurotoxin</keyword>
<keyword id="KW-0638">Presynaptic neurotoxin</keyword>
<keyword id="KW-0964">Secreted</keyword>
<keyword id="KW-0732">Signal</keyword>
<keyword id="KW-0800">Toxin</keyword>
<accession>P0DJN6</accession>
<accession>T1DJY9</accession>